<feature type="chain" id="PRO_1000116927" description="4-diphosphocytidyl-2-C-methyl-D-erythritol kinase">
    <location>
        <begin position="1"/>
        <end position="283"/>
    </location>
</feature>
<feature type="active site" evidence="1">
    <location>
        <position position="10"/>
    </location>
</feature>
<feature type="active site" evidence="1">
    <location>
        <position position="141"/>
    </location>
</feature>
<feature type="binding site" evidence="1">
    <location>
        <begin position="99"/>
        <end position="109"/>
    </location>
    <ligand>
        <name>ATP</name>
        <dbReference type="ChEBI" id="CHEBI:30616"/>
    </ligand>
</feature>
<dbReference type="EC" id="2.7.1.148" evidence="1"/>
<dbReference type="EMBL" id="CU928164">
    <property type="protein sequence ID" value="CAR17676.1"/>
    <property type="molecule type" value="Genomic_DNA"/>
</dbReference>
<dbReference type="RefSeq" id="WP_001260310.1">
    <property type="nucleotide sequence ID" value="NC_011750.1"/>
</dbReference>
<dbReference type="RefSeq" id="YP_002407544.1">
    <property type="nucleotide sequence ID" value="NC_011750.1"/>
</dbReference>
<dbReference type="SMR" id="B7NUX4"/>
<dbReference type="STRING" id="585057.ECIAI39_1544"/>
<dbReference type="KEGG" id="ect:ECIAI39_1544"/>
<dbReference type="PATRIC" id="fig|585057.6.peg.1614"/>
<dbReference type="HOGENOM" id="CLU_053057_3_0_6"/>
<dbReference type="UniPathway" id="UPA00056">
    <property type="reaction ID" value="UER00094"/>
</dbReference>
<dbReference type="Proteomes" id="UP000000749">
    <property type="component" value="Chromosome"/>
</dbReference>
<dbReference type="GO" id="GO:0050515">
    <property type="term" value="F:4-(cytidine 5'-diphospho)-2-C-methyl-D-erythritol kinase activity"/>
    <property type="evidence" value="ECO:0007669"/>
    <property type="project" value="UniProtKB-UniRule"/>
</dbReference>
<dbReference type="GO" id="GO:0005524">
    <property type="term" value="F:ATP binding"/>
    <property type="evidence" value="ECO:0007669"/>
    <property type="project" value="UniProtKB-UniRule"/>
</dbReference>
<dbReference type="GO" id="GO:0019288">
    <property type="term" value="P:isopentenyl diphosphate biosynthetic process, methylerythritol 4-phosphate pathway"/>
    <property type="evidence" value="ECO:0007669"/>
    <property type="project" value="UniProtKB-UniRule"/>
</dbReference>
<dbReference type="GO" id="GO:0016114">
    <property type="term" value="P:terpenoid biosynthetic process"/>
    <property type="evidence" value="ECO:0007669"/>
    <property type="project" value="InterPro"/>
</dbReference>
<dbReference type="FunFam" id="3.30.230.10:FF:000022">
    <property type="entry name" value="4-diphosphocytidyl-2-C-methyl-D-erythritol kinase"/>
    <property type="match status" value="1"/>
</dbReference>
<dbReference type="FunFam" id="3.30.70.890:FF:000004">
    <property type="entry name" value="4-diphosphocytidyl-2-C-methyl-D-erythritol kinase"/>
    <property type="match status" value="1"/>
</dbReference>
<dbReference type="Gene3D" id="3.30.230.10">
    <property type="match status" value="1"/>
</dbReference>
<dbReference type="Gene3D" id="3.30.70.890">
    <property type="entry name" value="GHMP kinase, C-terminal domain"/>
    <property type="match status" value="1"/>
</dbReference>
<dbReference type="HAMAP" id="MF_00061">
    <property type="entry name" value="IspE"/>
    <property type="match status" value="1"/>
</dbReference>
<dbReference type="InterPro" id="IPR013750">
    <property type="entry name" value="GHMP_kinase_C_dom"/>
</dbReference>
<dbReference type="InterPro" id="IPR036554">
    <property type="entry name" value="GHMP_kinase_C_sf"/>
</dbReference>
<dbReference type="InterPro" id="IPR006204">
    <property type="entry name" value="GHMP_kinase_N_dom"/>
</dbReference>
<dbReference type="InterPro" id="IPR004424">
    <property type="entry name" value="IspE"/>
</dbReference>
<dbReference type="InterPro" id="IPR020568">
    <property type="entry name" value="Ribosomal_Su5_D2-typ_SF"/>
</dbReference>
<dbReference type="InterPro" id="IPR014721">
    <property type="entry name" value="Ribsml_uS5_D2-typ_fold_subgr"/>
</dbReference>
<dbReference type="NCBIfam" id="TIGR00154">
    <property type="entry name" value="ispE"/>
    <property type="match status" value="1"/>
</dbReference>
<dbReference type="PANTHER" id="PTHR43527">
    <property type="entry name" value="4-DIPHOSPHOCYTIDYL-2-C-METHYL-D-ERYTHRITOL KINASE, CHLOROPLASTIC"/>
    <property type="match status" value="1"/>
</dbReference>
<dbReference type="PANTHER" id="PTHR43527:SF2">
    <property type="entry name" value="4-DIPHOSPHOCYTIDYL-2-C-METHYL-D-ERYTHRITOL KINASE, CHLOROPLASTIC"/>
    <property type="match status" value="1"/>
</dbReference>
<dbReference type="Pfam" id="PF08544">
    <property type="entry name" value="GHMP_kinases_C"/>
    <property type="match status" value="1"/>
</dbReference>
<dbReference type="Pfam" id="PF00288">
    <property type="entry name" value="GHMP_kinases_N"/>
    <property type="match status" value="1"/>
</dbReference>
<dbReference type="PIRSF" id="PIRSF010376">
    <property type="entry name" value="IspE"/>
    <property type="match status" value="1"/>
</dbReference>
<dbReference type="SUPFAM" id="SSF55060">
    <property type="entry name" value="GHMP Kinase, C-terminal domain"/>
    <property type="match status" value="1"/>
</dbReference>
<dbReference type="SUPFAM" id="SSF54211">
    <property type="entry name" value="Ribosomal protein S5 domain 2-like"/>
    <property type="match status" value="1"/>
</dbReference>
<protein>
    <recommendedName>
        <fullName evidence="1">4-diphosphocytidyl-2-C-methyl-D-erythritol kinase</fullName>
        <shortName evidence="1">CMK</shortName>
        <ecNumber evidence="1">2.7.1.148</ecNumber>
    </recommendedName>
    <alternativeName>
        <fullName evidence="1">4-(cytidine-5'-diphospho)-2-C-methyl-D-erythritol kinase</fullName>
    </alternativeName>
</protein>
<comment type="function">
    <text evidence="1">Catalyzes the phosphorylation of the position 2 hydroxy group of 4-diphosphocytidyl-2C-methyl-D-erythritol.</text>
</comment>
<comment type="catalytic activity">
    <reaction evidence="1">
        <text>4-CDP-2-C-methyl-D-erythritol + ATP = 4-CDP-2-C-methyl-D-erythritol 2-phosphate + ADP + H(+)</text>
        <dbReference type="Rhea" id="RHEA:18437"/>
        <dbReference type="ChEBI" id="CHEBI:15378"/>
        <dbReference type="ChEBI" id="CHEBI:30616"/>
        <dbReference type="ChEBI" id="CHEBI:57823"/>
        <dbReference type="ChEBI" id="CHEBI:57919"/>
        <dbReference type="ChEBI" id="CHEBI:456216"/>
        <dbReference type="EC" id="2.7.1.148"/>
    </reaction>
</comment>
<comment type="pathway">
    <text evidence="1">Isoprenoid biosynthesis; isopentenyl diphosphate biosynthesis via DXP pathway; isopentenyl diphosphate from 1-deoxy-D-xylulose 5-phosphate: step 3/6.</text>
</comment>
<comment type="subunit">
    <text evidence="1">Homodimer.</text>
</comment>
<comment type="similarity">
    <text evidence="1">Belongs to the GHMP kinase family. IspE subfamily.</text>
</comment>
<sequence>MRTQWPSPAKLNLFLYITGQRADGYHTLQTLFQFLDYGDTINIELRDDGDIRLLTPVEGVEHEDNLIVRAARLLMKTAADSGRLPTGSGANISIDKRLPMGGGLGGGSSNAATVLVALNHLWQCGLSMDELAEMGLTLGADVPVFVRGHAAFAEGVGEILTPVDPPEKWYLVAHPGVSIPTPVIFKDPELPRNTPKRSIETLLKCEFSNDCEVIARKRFREVDAVLSWLLEYAPSRLTGTGACVFAEFDTESEARQVLEQAPEWLNGFVAKGVNLSPLHRAML</sequence>
<reference key="1">
    <citation type="journal article" date="2009" name="PLoS Genet.">
        <title>Organised genome dynamics in the Escherichia coli species results in highly diverse adaptive paths.</title>
        <authorList>
            <person name="Touchon M."/>
            <person name="Hoede C."/>
            <person name="Tenaillon O."/>
            <person name="Barbe V."/>
            <person name="Baeriswyl S."/>
            <person name="Bidet P."/>
            <person name="Bingen E."/>
            <person name="Bonacorsi S."/>
            <person name="Bouchier C."/>
            <person name="Bouvet O."/>
            <person name="Calteau A."/>
            <person name="Chiapello H."/>
            <person name="Clermont O."/>
            <person name="Cruveiller S."/>
            <person name="Danchin A."/>
            <person name="Diard M."/>
            <person name="Dossat C."/>
            <person name="Karoui M.E."/>
            <person name="Frapy E."/>
            <person name="Garry L."/>
            <person name="Ghigo J.M."/>
            <person name="Gilles A.M."/>
            <person name="Johnson J."/>
            <person name="Le Bouguenec C."/>
            <person name="Lescat M."/>
            <person name="Mangenot S."/>
            <person name="Martinez-Jehanne V."/>
            <person name="Matic I."/>
            <person name="Nassif X."/>
            <person name="Oztas S."/>
            <person name="Petit M.A."/>
            <person name="Pichon C."/>
            <person name="Rouy Z."/>
            <person name="Ruf C.S."/>
            <person name="Schneider D."/>
            <person name="Tourret J."/>
            <person name="Vacherie B."/>
            <person name="Vallenet D."/>
            <person name="Medigue C."/>
            <person name="Rocha E.P.C."/>
            <person name="Denamur E."/>
        </authorList>
    </citation>
    <scope>NUCLEOTIDE SEQUENCE [LARGE SCALE GENOMIC DNA]</scope>
    <source>
        <strain>IAI39 / ExPEC</strain>
    </source>
</reference>
<keyword id="KW-0067">ATP-binding</keyword>
<keyword id="KW-0414">Isoprene biosynthesis</keyword>
<keyword id="KW-0418">Kinase</keyword>
<keyword id="KW-0547">Nucleotide-binding</keyword>
<keyword id="KW-0808">Transferase</keyword>
<evidence type="ECO:0000255" key="1">
    <source>
        <dbReference type="HAMAP-Rule" id="MF_00061"/>
    </source>
</evidence>
<gene>
    <name evidence="1" type="primary">ispE</name>
    <name type="ordered locus">ECIAI39_1544</name>
</gene>
<accession>B7NUX4</accession>
<name>ISPE_ECO7I</name>
<organism>
    <name type="scientific">Escherichia coli O7:K1 (strain IAI39 / ExPEC)</name>
    <dbReference type="NCBI Taxonomy" id="585057"/>
    <lineage>
        <taxon>Bacteria</taxon>
        <taxon>Pseudomonadati</taxon>
        <taxon>Pseudomonadota</taxon>
        <taxon>Gammaproteobacteria</taxon>
        <taxon>Enterobacterales</taxon>
        <taxon>Enterobacteriaceae</taxon>
        <taxon>Escherichia</taxon>
    </lineage>
</organism>
<proteinExistence type="inferred from homology"/>